<dbReference type="EMBL" id="KC778569">
    <property type="protein sequence ID" value="AGO98225.1"/>
    <property type="molecule type" value="Genomic_DNA"/>
</dbReference>
<dbReference type="EMBL" id="KF546303">
    <property type="protein sequence ID" value="AHX98327.1"/>
    <property type="molecule type" value="Genomic_DNA"/>
</dbReference>
<dbReference type="EMBL" id="KF546304">
    <property type="protein sequence ID" value="AHX98328.1"/>
    <property type="molecule type" value="Genomic_DNA"/>
</dbReference>
<dbReference type="GO" id="GO:0090729">
    <property type="term" value="F:toxin activity"/>
    <property type="evidence" value="ECO:0007669"/>
    <property type="project" value="UniProtKB-KW"/>
</dbReference>
<dbReference type="InterPro" id="IPR027582">
    <property type="entry name" value="Amanitin/phalloidin"/>
</dbReference>
<dbReference type="NCBIfam" id="TIGR04309">
    <property type="entry name" value="amanitin"/>
    <property type="match status" value="1"/>
</dbReference>
<reference key="1">
    <citation type="journal article" date="2014" name="Toxicon">
        <title>The molecular diversity of toxin gene families in lethal Amanita mushrooms.</title>
        <authorList>
            <person name="Li P."/>
            <person name="Deng W."/>
            <person name="Li T."/>
        </authorList>
    </citation>
    <scope>NUCLEOTIDE SEQUENCE [GENOMIC DNA]</scope>
    <scope>FUNCTION</scope>
</reference>
<evidence type="ECO:0000250" key="1">
    <source>
        <dbReference type="UniProtKB" id="A0A067SLB9"/>
    </source>
</evidence>
<evidence type="ECO:0000250" key="2">
    <source>
        <dbReference type="UniProtKB" id="A8W7M4"/>
    </source>
</evidence>
<evidence type="ECO:0000250" key="3">
    <source>
        <dbReference type="UniProtKB" id="P85421"/>
    </source>
</evidence>
<evidence type="ECO:0000303" key="4">
    <source>
    </source>
</evidence>
<evidence type="ECO:0000305" key="5"/>
<evidence type="ECO:0000305" key="6">
    <source>
    </source>
</evidence>
<proteinExistence type="inferred from homology"/>
<keyword id="KW-0883">Thioether bond</keyword>
<keyword id="KW-0800">Toxin</keyword>
<accession>A0A023UBY3</accession>
<comment type="function">
    <text evidence="6">Major toxin that belongs to the bicyclic heptapeptides called phallotoxins (PubMed:24613547). Although structurally related to amatoxins, phallotoxins have a different mode of action, which is the stabilization of F-actin (PubMed:24613547). Phallotoxins are poisonous when administered parenterally, but not orally because of poor absorption (PubMed:24613547).</text>
</comment>
<comment type="PTM">
    <text evidence="1">Processed by the macrocyclase-peptidase enzyme POPB to yield a toxic cyclic heptapeptide (By similarity). POPB first removes 10 residues from the N-terminus (By similarity). Conformational trapping of the remaining peptide forces the enzyme to release this intermediate rather than proceed to macrocyclization (By similarity). The enzyme rebinds the remaining peptide in a different conformation and catalyzes macrocyclization of the N-terminal 7 residues (By similarity).</text>
</comment>
<comment type="similarity">
    <text evidence="5">Belongs to the MSDIN fungal toxin family.</text>
</comment>
<feature type="propeptide" id="PRO_0000443623" evidence="2">
    <location>
        <position position="1"/>
    </location>
</feature>
<feature type="peptide" id="PRO_0000443624" description="Phallacidin" evidence="2">
    <location>
        <begin position="2"/>
        <end position="8"/>
    </location>
</feature>
<feature type="propeptide" id="PRO_0000443625" evidence="2">
    <location>
        <begin position="9"/>
        <end position="23"/>
    </location>
</feature>
<feature type="cross-link" description="Cyclopeptide (Ala-Pro)" evidence="2">
    <location>
        <begin position="2"/>
        <end position="8"/>
    </location>
</feature>
<feature type="cross-link" description="2'-cysteinyl-6'-hydroxytryptophan sulfoxide (Trp-Cys)" evidence="3">
    <location>
        <begin position="3"/>
        <end position="7"/>
    </location>
</feature>
<feature type="non-terminal residue" evidence="5">
    <location>
        <position position="1"/>
    </location>
</feature>
<name>PHAT_AMAPH</name>
<protein>
    <recommendedName>
        <fullName evidence="4">Phallacidin proprotein 1</fullName>
    </recommendedName>
    <component>
        <recommendedName>
            <fullName evidence="4">Phallacidin</fullName>
        </recommendedName>
    </component>
</protein>
<sequence>PAWLVDCPCVGDDINRLLTRGEK</sequence>
<gene>
    <name evidence="4" type="primary">PHA1</name>
</gene>
<organism>
    <name type="scientific">Amanita phalloides</name>
    <name type="common">Death cap</name>
    <dbReference type="NCBI Taxonomy" id="67723"/>
    <lineage>
        <taxon>Eukaryota</taxon>
        <taxon>Fungi</taxon>
        <taxon>Dikarya</taxon>
        <taxon>Basidiomycota</taxon>
        <taxon>Agaricomycotina</taxon>
        <taxon>Agaricomycetes</taxon>
        <taxon>Agaricomycetidae</taxon>
        <taxon>Agaricales</taxon>
        <taxon>Pluteineae</taxon>
        <taxon>Amanitaceae</taxon>
        <taxon>Amanita</taxon>
    </lineage>
</organism>